<comment type="function">
    <text evidence="2 7">Olfactory receptor specific for trace amines (By similarity). Trace amine compounds are enriched in animal body fluids and act on trace amine-associated receptors (TAARs) to elicit both intraspecific and interspecific innate behaviors (By similarity). Ligand-binding causes a conformation change that triggers signaling via G alpha proteins, possibly G(i)/G(o) G alpha proteins (PubMed:25391046).</text>
</comment>
<comment type="subcellular location">
    <subcellularLocation>
        <location evidence="7">Cell membrane</location>
        <topology evidence="3">Multi-pass membrane protein</topology>
    </subcellularLocation>
</comment>
<comment type="tissue specificity">
    <text evidence="5">Expressed in kidney and amygdala. Not expressed in other tissues or brain regions tested.</text>
</comment>
<comment type="similarity">
    <text evidence="4">Belongs to the G-protein coupled receptor 1 family.</text>
</comment>
<gene>
    <name type="primary">TAAR8</name>
    <name type="synonym">GPR102</name>
    <name type="synonym">TA5</name>
    <name type="synonym">TAR5</name>
    <name type="synonym">TRAR5</name>
</gene>
<evidence type="ECO:0000250" key="1">
    <source>
        <dbReference type="UniProtKB" id="Q5QD04"/>
    </source>
</evidence>
<evidence type="ECO:0000250" key="2">
    <source>
        <dbReference type="UniProtKB" id="Q5QD05"/>
    </source>
</evidence>
<evidence type="ECO:0000255" key="3"/>
<evidence type="ECO:0000255" key="4">
    <source>
        <dbReference type="PROSITE-ProRule" id="PRU00521"/>
    </source>
</evidence>
<evidence type="ECO:0000269" key="5">
    <source>
    </source>
</evidence>
<evidence type="ECO:0000269" key="6">
    <source>
    </source>
</evidence>
<evidence type="ECO:0000269" key="7">
    <source>
    </source>
</evidence>
<dbReference type="EMBL" id="AF380193">
    <property type="protein sequence ID" value="AAK71244.1"/>
    <property type="molecule type" value="Genomic_DNA"/>
</dbReference>
<dbReference type="EMBL" id="AF411116">
    <property type="protein sequence ID" value="AAL26487.1"/>
    <property type="molecule type" value="Genomic_DNA"/>
</dbReference>
<dbReference type="EMBL" id="AY183468">
    <property type="protein sequence ID" value="AAO24659.1"/>
    <property type="molecule type" value="mRNA"/>
</dbReference>
<dbReference type="EMBL" id="AL513524">
    <property type="status" value="NOT_ANNOTATED_CDS"/>
    <property type="molecule type" value="Genomic_DNA"/>
</dbReference>
<dbReference type="EMBL" id="BC069166">
    <property type="protein sequence ID" value="AAH69166.1"/>
    <property type="molecule type" value="mRNA"/>
</dbReference>
<dbReference type="CCDS" id="CCDS5154.1"/>
<dbReference type="RefSeq" id="NP_444508.1">
    <property type="nucleotide sequence ID" value="NM_053278.3"/>
</dbReference>
<dbReference type="SMR" id="Q969N4"/>
<dbReference type="FunCoup" id="Q969N4">
    <property type="interactions" value="410"/>
</dbReference>
<dbReference type="IntAct" id="Q969N4">
    <property type="interactions" value="1"/>
</dbReference>
<dbReference type="STRING" id="9606.ENSP00000275200"/>
<dbReference type="ChEMBL" id="CHEMBL4523902"/>
<dbReference type="GlyCosmos" id="Q969N4">
    <property type="glycosylation" value="2 sites, No reported glycans"/>
</dbReference>
<dbReference type="GlyGen" id="Q969N4">
    <property type="glycosylation" value="2 sites"/>
</dbReference>
<dbReference type="BioMuta" id="TAAR8"/>
<dbReference type="DMDM" id="38258876"/>
<dbReference type="PaxDb" id="9606-ENSP00000275200"/>
<dbReference type="ProteomicsDB" id="75805"/>
<dbReference type="Antibodypedia" id="19706">
    <property type="antibodies" value="114 antibodies from 21 providers"/>
</dbReference>
<dbReference type="DNASU" id="83551"/>
<dbReference type="Ensembl" id="ENST00000275200.2">
    <property type="protein sequence ID" value="ENSP00000275200.1"/>
    <property type="gene ID" value="ENSG00000146385.2"/>
</dbReference>
<dbReference type="GeneID" id="83551"/>
<dbReference type="KEGG" id="hsa:83551"/>
<dbReference type="MANE-Select" id="ENST00000275200.2">
    <property type="protein sequence ID" value="ENSP00000275200.1"/>
    <property type="RefSeq nucleotide sequence ID" value="NM_053278.3"/>
    <property type="RefSeq protein sequence ID" value="NP_444508.1"/>
</dbReference>
<dbReference type="UCSC" id="uc011ecj.2">
    <property type="organism name" value="human"/>
</dbReference>
<dbReference type="AGR" id="HGNC:14964"/>
<dbReference type="CTD" id="83551"/>
<dbReference type="DisGeNET" id="83551"/>
<dbReference type="GeneCards" id="TAAR8"/>
<dbReference type="HGNC" id="HGNC:14964">
    <property type="gene designation" value="TAAR8"/>
</dbReference>
<dbReference type="HPA" id="ENSG00000146385">
    <property type="expression patterns" value="Not detected"/>
</dbReference>
<dbReference type="MIM" id="606927">
    <property type="type" value="gene"/>
</dbReference>
<dbReference type="neXtProt" id="NX_Q969N4"/>
<dbReference type="OpenTargets" id="ENSG00000146385"/>
<dbReference type="PharmGKB" id="PA28850"/>
<dbReference type="VEuPathDB" id="HostDB:ENSG00000146385"/>
<dbReference type="eggNOG" id="KOG3656">
    <property type="taxonomic scope" value="Eukaryota"/>
</dbReference>
<dbReference type="GeneTree" id="ENSGT00940000161306"/>
<dbReference type="HOGENOM" id="CLU_009579_11_0_1"/>
<dbReference type="InParanoid" id="Q969N4"/>
<dbReference type="OMA" id="LCFICID"/>
<dbReference type="OrthoDB" id="5959645at2759"/>
<dbReference type="PAN-GO" id="Q969N4">
    <property type="GO annotations" value="1 GO annotation based on evolutionary models"/>
</dbReference>
<dbReference type="PhylomeDB" id="Q969N4"/>
<dbReference type="TreeFam" id="TF343107"/>
<dbReference type="PathwayCommons" id="Q969N4"/>
<dbReference type="Reactome" id="R-HSA-375280">
    <property type="pathway name" value="Amine ligand-binding receptors"/>
</dbReference>
<dbReference type="Reactome" id="R-HSA-418555">
    <property type="pathway name" value="G alpha (s) signalling events"/>
</dbReference>
<dbReference type="SignaLink" id="Q969N4"/>
<dbReference type="BioGRID-ORCS" id="83551">
    <property type="hits" value="12 hits in 1098 CRISPR screens"/>
</dbReference>
<dbReference type="GeneWiki" id="TAAR8"/>
<dbReference type="GenomeRNAi" id="83551"/>
<dbReference type="Pharos" id="Q969N4">
    <property type="development level" value="Tbio"/>
</dbReference>
<dbReference type="PRO" id="PR:Q969N4"/>
<dbReference type="Proteomes" id="UP000005640">
    <property type="component" value="Chromosome 6"/>
</dbReference>
<dbReference type="RNAct" id="Q969N4">
    <property type="molecule type" value="protein"/>
</dbReference>
<dbReference type="GO" id="GO:0005886">
    <property type="term" value="C:plasma membrane"/>
    <property type="evidence" value="ECO:0000314"/>
    <property type="project" value="UniProtKB"/>
</dbReference>
<dbReference type="GO" id="GO:0004930">
    <property type="term" value="F:G protein-coupled receptor activity"/>
    <property type="evidence" value="ECO:0000304"/>
    <property type="project" value="GDB"/>
</dbReference>
<dbReference type="GO" id="GO:0001594">
    <property type="term" value="F:trace-amine receptor activity"/>
    <property type="evidence" value="ECO:0000318"/>
    <property type="project" value="GO_Central"/>
</dbReference>
<dbReference type="GO" id="GO:0007186">
    <property type="term" value="P:G protein-coupled receptor signaling pathway"/>
    <property type="evidence" value="ECO:0000318"/>
    <property type="project" value="GO_Central"/>
</dbReference>
<dbReference type="CDD" id="cd15316">
    <property type="entry name" value="7tmA_TAAR6_8_9"/>
    <property type="match status" value="1"/>
</dbReference>
<dbReference type="FunFam" id="1.20.1070.10:FF:000030">
    <property type="entry name" value="trace amine-associated receptor 1"/>
    <property type="match status" value="1"/>
</dbReference>
<dbReference type="Gene3D" id="1.20.1070.10">
    <property type="entry name" value="Rhodopsin 7-helix transmembrane proteins"/>
    <property type="match status" value="1"/>
</dbReference>
<dbReference type="InterPro" id="IPR000276">
    <property type="entry name" value="GPCR_Rhodpsn"/>
</dbReference>
<dbReference type="InterPro" id="IPR017452">
    <property type="entry name" value="GPCR_Rhodpsn_7TM"/>
</dbReference>
<dbReference type="InterPro" id="IPR050569">
    <property type="entry name" value="TAAR"/>
</dbReference>
<dbReference type="InterPro" id="IPR009132">
    <property type="entry name" value="TAAR_fam"/>
</dbReference>
<dbReference type="PANTHER" id="PTHR24249">
    <property type="entry name" value="HISTAMINE RECEPTOR-RELATED G-PROTEIN COUPLED RECEPTOR"/>
    <property type="match status" value="1"/>
</dbReference>
<dbReference type="PANTHER" id="PTHR24249:SF405">
    <property type="entry name" value="TRACE AMINE-ASSOCIATED RECEPTOR 8"/>
    <property type="match status" value="1"/>
</dbReference>
<dbReference type="Pfam" id="PF00001">
    <property type="entry name" value="7tm_1"/>
    <property type="match status" value="1"/>
</dbReference>
<dbReference type="PRINTS" id="PR00237">
    <property type="entry name" value="GPCRRHODOPSN"/>
</dbReference>
<dbReference type="PRINTS" id="PR01830">
    <property type="entry name" value="TRACEAMINER"/>
</dbReference>
<dbReference type="SMART" id="SM01381">
    <property type="entry name" value="7TM_GPCR_Srsx"/>
    <property type="match status" value="1"/>
</dbReference>
<dbReference type="SUPFAM" id="SSF81321">
    <property type="entry name" value="Family A G protein-coupled receptor-like"/>
    <property type="match status" value="1"/>
</dbReference>
<dbReference type="PROSITE" id="PS00237">
    <property type="entry name" value="G_PROTEIN_RECEP_F1_1"/>
    <property type="match status" value="1"/>
</dbReference>
<dbReference type="PROSITE" id="PS50262">
    <property type="entry name" value="G_PROTEIN_RECEP_F1_2"/>
    <property type="match status" value="1"/>
</dbReference>
<name>TAAR8_HUMAN</name>
<organism>
    <name type="scientific">Homo sapiens</name>
    <name type="common">Human</name>
    <dbReference type="NCBI Taxonomy" id="9606"/>
    <lineage>
        <taxon>Eukaryota</taxon>
        <taxon>Metazoa</taxon>
        <taxon>Chordata</taxon>
        <taxon>Craniata</taxon>
        <taxon>Vertebrata</taxon>
        <taxon>Euteleostomi</taxon>
        <taxon>Mammalia</taxon>
        <taxon>Eutheria</taxon>
        <taxon>Euarchontoglires</taxon>
        <taxon>Primates</taxon>
        <taxon>Haplorrhini</taxon>
        <taxon>Catarrhini</taxon>
        <taxon>Hominidae</taxon>
        <taxon>Homo</taxon>
    </lineage>
</organism>
<proteinExistence type="evidence at transcript level"/>
<keyword id="KW-1003">Cell membrane</keyword>
<keyword id="KW-1015">Disulfide bond</keyword>
<keyword id="KW-0297">G-protein coupled receptor</keyword>
<keyword id="KW-0325">Glycoprotein</keyword>
<keyword id="KW-0472">Membrane</keyword>
<keyword id="KW-0675">Receptor</keyword>
<keyword id="KW-1185">Reference proteome</keyword>
<keyword id="KW-0807">Transducer</keyword>
<keyword id="KW-0812">Transmembrane</keyword>
<keyword id="KW-1133">Transmembrane helix</keyword>
<feature type="chain" id="PRO_0000070174" description="Trace amine-associated receptor 8">
    <location>
        <begin position="1"/>
        <end position="342"/>
    </location>
</feature>
<feature type="topological domain" description="Extracellular" evidence="3">
    <location>
        <begin position="1"/>
        <end position="31"/>
    </location>
</feature>
<feature type="transmembrane region" description="Helical; Name=1" evidence="3">
    <location>
        <begin position="32"/>
        <end position="52"/>
    </location>
</feature>
<feature type="topological domain" description="Cytoplasmic" evidence="3">
    <location>
        <begin position="53"/>
        <end position="67"/>
    </location>
</feature>
<feature type="transmembrane region" description="Helical; Name=2" evidence="3">
    <location>
        <begin position="68"/>
        <end position="88"/>
    </location>
</feature>
<feature type="topological domain" description="Extracellular" evidence="3">
    <location>
        <begin position="89"/>
        <end position="111"/>
    </location>
</feature>
<feature type="transmembrane region" description="Helical; Name=3" evidence="3">
    <location>
        <begin position="112"/>
        <end position="132"/>
    </location>
</feature>
<feature type="topological domain" description="Cytoplasmic" evidence="3">
    <location>
        <begin position="133"/>
        <end position="146"/>
    </location>
</feature>
<feature type="transmembrane region" description="Helical; Name=4" evidence="3">
    <location>
        <begin position="147"/>
        <end position="167"/>
    </location>
</feature>
<feature type="topological domain" description="Extracellular" evidence="3">
    <location>
        <begin position="168"/>
        <end position="195"/>
    </location>
</feature>
<feature type="transmembrane region" description="Helical; Name=5" evidence="3">
    <location>
        <begin position="196"/>
        <end position="216"/>
    </location>
</feature>
<feature type="topological domain" description="Cytoplasmic" evidence="3">
    <location>
        <begin position="217"/>
        <end position="258"/>
    </location>
</feature>
<feature type="transmembrane region" description="Helical; Name=6" evidence="3">
    <location>
        <begin position="259"/>
        <end position="279"/>
    </location>
</feature>
<feature type="topological domain" description="Extracellular" evidence="3">
    <location>
        <position position="280"/>
    </location>
</feature>
<feature type="transmembrane region" description="Helical; Name=7" evidence="3">
    <location>
        <begin position="281"/>
        <end position="301"/>
    </location>
</feature>
<feature type="topological domain" description="Cytoplasmic" evidence="3">
    <location>
        <begin position="302"/>
        <end position="342"/>
    </location>
</feature>
<feature type="glycosylation site" description="N-linked (GlcNAc...) asparagine" evidence="3">
    <location>
        <position position="4"/>
    </location>
</feature>
<feature type="glycosylation site" description="N-linked (GlcNAc...) asparagine" evidence="3">
    <location>
        <position position="18"/>
    </location>
</feature>
<feature type="disulfide bond" evidence="1">
    <location>
        <begin position="21"/>
        <end position="185"/>
    </location>
</feature>
<feature type="disulfide bond" evidence="4">
    <location>
        <begin position="104"/>
        <end position="189"/>
    </location>
</feature>
<feature type="sequence variant" id="VAR_049447" description="In dbSNP:rs8192626.">
    <original>S</original>
    <variation>N</variation>
    <location>
        <position position="153"/>
    </location>
</feature>
<feature type="sequence variant" id="VAR_066638" description="In dbSNP:rs187426282." evidence="6">
    <original>V</original>
    <variation>D</variation>
    <location>
        <position position="211"/>
    </location>
</feature>
<feature type="sequence variant" id="VAR_049448" description="In dbSNP:rs8192627.">
    <original>D</original>
    <variation>A</variation>
    <location>
        <position position="328"/>
    </location>
</feature>
<reference key="1">
    <citation type="journal article" date="2001" name="Proc. Natl. Acad. Sci. U.S.A.">
        <title>Trace amines: identification of a family of mammalian G protein-coupled receptors.</title>
        <authorList>
            <person name="Borowsky B."/>
            <person name="Adham N."/>
            <person name="Jones K.A."/>
            <person name="Raddatz R."/>
            <person name="Artymyshyn R."/>
            <person name="Ogozalek K.L."/>
            <person name="Durkin M.M."/>
            <person name="Lakhlani P.P."/>
            <person name="Bonini J.A."/>
            <person name="Pathirana S."/>
            <person name="Boyle N."/>
            <person name="Pu X."/>
            <person name="Kouranova E."/>
            <person name="Lichtblau H."/>
            <person name="Ochoa F.Y."/>
            <person name="Branchek T.A."/>
            <person name="Gerald C."/>
        </authorList>
    </citation>
    <scope>NUCLEOTIDE SEQUENCE [GENOMIC DNA]</scope>
    <scope>TISSUE SPECIFICITY</scope>
</reference>
<reference key="2">
    <citation type="journal article" date="2001" name="Gene">
        <title>Discovery and mapping of ten novel G protein-coupled receptor genes.</title>
        <authorList>
            <person name="Lee D.K."/>
            <person name="Nguyen T."/>
            <person name="Lynch K.R."/>
            <person name="Cheng R."/>
            <person name="Vanti W.B."/>
            <person name="Arkhitko O."/>
            <person name="Lewis T."/>
            <person name="Evans J.F."/>
            <person name="George S.R."/>
            <person name="O'Dowd B.F."/>
        </authorList>
    </citation>
    <scope>NUCLEOTIDE SEQUENCE [GENOMIC DNA]</scope>
</reference>
<reference key="3">
    <citation type="submission" date="2002-11" db="EMBL/GenBank/DDBJ databases">
        <title>cDNA clones of human proteins involved in signal transduction sequenced by the Guthrie cDNA resource center (www.cdna.org).</title>
        <authorList>
            <person name="Kopatz S.A."/>
            <person name="Aronstam R.S."/>
            <person name="Sharma S.V."/>
        </authorList>
    </citation>
    <scope>NUCLEOTIDE SEQUENCE [LARGE SCALE MRNA]</scope>
</reference>
<reference key="4">
    <citation type="journal article" date="2003" name="Nature">
        <title>The DNA sequence and analysis of human chromosome 6.</title>
        <authorList>
            <person name="Mungall A.J."/>
            <person name="Palmer S.A."/>
            <person name="Sims S.K."/>
            <person name="Edwards C.A."/>
            <person name="Ashurst J.L."/>
            <person name="Wilming L."/>
            <person name="Jones M.C."/>
            <person name="Horton R."/>
            <person name="Hunt S.E."/>
            <person name="Scott C.E."/>
            <person name="Gilbert J.G.R."/>
            <person name="Clamp M.E."/>
            <person name="Bethel G."/>
            <person name="Milne S."/>
            <person name="Ainscough R."/>
            <person name="Almeida J.P."/>
            <person name="Ambrose K.D."/>
            <person name="Andrews T.D."/>
            <person name="Ashwell R.I.S."/>
            <person name="Babbage A.K."/>
            <person name="Bagguley C.L."/>
            <person name="Bailey J."/>
            <person name="Banerjee R."/>
            <person name="Barker D.J."/>
            <person name="Barlow K.F."/>
            <person name="Bates K."/>
            <person name="Beare D.M."/>
            <person name="Beasley H."/>
            <person name="Beasley O."/>
            <person name="Bird C.P."/>
            <person name="Blakey S.E."/>
            <person name="Bray-Allen S."/>
            <person name="Brook J."/>
            <person name="Brown A.J."/>
            <person name="Brown J.Y."/>
            <person name="Burford D.C."/>
            <person name="Burrill W."/>
            <person name="Burton J."/>
            <person name="Carder C."/>
            <person name="Carter N.P."/>
            <person name="Chapman J.C."/>
            <person name="Clark S.Y."/>
            <person name="Clark G."/>
            <person name="Clee C.M."/>
            <person name="Clegg S."/>
            <person name="Cobley V."/>
            <person name="Collier R.E."/>
            <person name="Collins J.E."/>
            <person name="Colman L.K."/>
            <person name="Corby N.R."/>
            <person name="Coville G.J."/>
            <person name="Culley K.M."/>
            <person name="Dhami P."/>
            <person name="Davies J."/>
            <person name="Dunn M."/>
            <person name="Earthrowl M.E."/>
            <person name="Ellington A.E."/>
            <person name="Evans K.A."/>
            <person name="Faulkner L."/>
            <person name="Francis M.D."/>
            <person name="Frankish A."/>
            <person name="Frankland J."/>
            <person name="French L."/>
            <person name="Garner P."/>
            <person name="Garnett J."/>
            <person name="Ghori M.J."/>
            <person name="Gilby L.M."/>
            <person name="Gillson C.J."/>
            <person name="Glithero R.J."/>
            <person name="Grafham D.V."/>
            <person name="Grant M."/>
            <person name="Gribble S."/>
            <person name="Griffiths C."/>
            <person name="Griffiths M.N.D."/>
            <person name="Hall R."/>
            <person name="Halls K.S."/>
            <person name="Hammond S."/>
            <person name="Harley J.L."/>
            <person name="Hart E.A."/>
            <person name="Heath P.D."/>
            <person name="Heathcott R."/>
            <person name="Holmes S.J."/>
            <person name="Howden P.J."/>
            <person name="Howe K.L."/>
            <person name="Howell G.R."/>
            <person name="Huckle E."/>
            <person name="Humphray S.J."/>
            <person name="Humphries M.D."/>
            <person name="Hunt A.R."/>
            <person name="Johnson C.M."/>
            <person name="Joy A.A."/>
            <person name="Kay M."/>
            <person name="Keenan S.J."/>
            <person name="Kimberley A.M."/>
            <person name="King A."/>
            <person name="Laird G.K."/>
            <person name="Langford C."/>
            <person name="Lawlor S."/>
            <person name="Leongamornlert D.A."/>
            <person name="Leversha M."/>
            <person name="Lloyd C.R."/>
            <person name="Lloyd D.M."/>
            <person name="Loveland J.E."/>
            <person name="Lovell J."/>
            <person name="Martin S."/>
            <person name="Mashreghi-Mohammadi M."/>
            <person name="Maslen G.L."/>
            <person name="Matthews L."/>
            <person name="McCann O.T."/>
            <person name="McLaren S.J."/>
            <person name="McLay K."/>
            <person name="McMurray A."/>
            <person name="Moore M.J.F."/>
            <person name="Mullikin J.C."/>
            <person name="Niblett D."/>
            <person name="Nickerson T."/>
            <person name="Novik K.L."/>
            <person name="Oliver K."/>
            <person name="Overton-Larty E.K."/>
            <person name="Parker A."/>
            <person name="Patel R."/>
            <person name="Pearce A.V."/>
            <person name="Peck A.I."/>
            <person name="Phillimore B.J.C.T."/>
            <person name="Phillips S."/>
            <person name="Plumb R.W."/>
            <person name="Porter K.M."/>
            <person name="Ramsey Y."/>
            <person name="Ranby S.A."/>
            <person name="Rice C.M."/>
            <person name="Ross M.T."/>
            <person name="Searle S.M."/>
            <person name="Sehra H.K."/>
            <person name="Sheridan E."/>
            <person name="Skuce C.D."/>
            <person name="Smith S."/>
            <person name="Smith M."/>
            <person name="Spraggon L."/>
            <person name="Squares S.L."/>
            <person name="Steward C.A."/>
            <person name="Sycamore N."/>
            <person name="Tamlyn-Hall G."/>
            <person name="Tester J."/>
            <person name="Theaker A.J."/>
            <person name="Thomas D.W."/>
            <person name="Thorpe A."/>
            <person name="Tracey A."/>
            <person name="Tromans A."/>
            <person name="Tubby B."/>
            <person name="Wall M."/>
            <person name="Wallis J.M."/>
            <person name="West A.P."/>
            <person name="White S.S."/>
            <person name="Whitehead S.L."/>
            <person name="Whittaker H."/>
            <person name="Wild A."/>
            <person name="Willey D.J."/>
            <person name="Wilmer T.E."/>
            <person name="Wood J.M."/>
            <person name="Wray P.W."/>
            <person name="Wyatt J.C."/>
            <person name="Young L."/>
            <person name="Younger R.M."/>
            <person name="Bentley D.R."/>
            <person name="Coulson A."/>
            <person name="Durbin R.M."/>
            <person name="Hubbard T."/>
            <person name="Sulston J.E."/>
            <person name="Dunham I."/>
            <person name="Rogers J."/>
            <person name="Beck S."/>
        </authorList>
    </citation>
    <scope>NUCLEOTIDE SEQUENCE [LARGE SCALE GENOMIC DNA]</scope>
</reference>
<reference key="5">
    <citation type="journal article" date="2004" name="Genome Res.">
        <title>The status, quality, and expansion of the NIH full-length cDNA project: the Mammalian Gene Collection (MGC).</title>
        <authorList>
            <consortium name="The MGC Project Team"/>
        </authorList>
    </citation>
    <scope>NUCLEOTIDE SEQUENCE [LARGE SCALE MRNA]</scope>
</reference>
<reference key="6">
    <citation type="journal article" date="2011" name="Am. J. Hum. Genet.">
        <title>Mutations causing familial biparental hydatidiform mole implicate c6orf221 as a possible regulator of genomic imprinting in the human oocyte.</title>
        <authorList>
            <person name="Parry D.A."/>
            <person name="Logan C.V."/>
            <person name="Hayward B.E."/>
            <person name="Shires M."/>
            <person name="Landolsi H."/>
            <person name="Diggle C."/>
            <person name="Carr I."/>
            <person name="Rittore C."/>
            <person name="Touitou I."/>
            <person name="Philibert L."/>
            <person name="Fisher R.A."/>
            <person name="Fallahian M."/>
            <person name="Huntriss J.D."/>
            <person name="Picton H.M."/>
            <person name="Malik S."/>
            <person name="Taylor G.R."/>
            <person name="Johnson C.A."/>
            <person name="Bonthron D.T."/>
            <person name="Sheridan E.G."/>
        </authorList>
    </citation>
    <scope>VARIANT ASP-211</scope>
</reference>
<reference key="7">
    <citation type="journal article" date="2014" name="Int. J. Mol. Sci.">
        <title>Analysis of human TAAR8 and murine Taar8b mediated signaling pathways and expression profile.</title>
        <authorList>
            <person name="Muehlhaus J."/>
            <person name="Dinter J."/>
            <person name="Nuernberg D."/>
            <person name="Rehders M."/>
            <person name="Depke M."/>
            <person name="Golchert J."/>
            <person name="Homuth G."/>
            <person name="Yi C.X."/>
            <person name="Morin S."/>
            <person name="Koehrle J."/>
            <person name="Brix K."/>
            <person name="Tschoep M."/>
            <person name="Kleinau G."/>
            <person name="Biebermann H."/>
        </authorList>
    </citation>
    <scope>FUNCTION</scope>
    <scope>SUBCELLULAR LOCATION</scope>
</reference>
<accession>Q969N4</accession>
<accession>Q5VUQ0</accession>
<sequence>MTSNFSQPVVQLCYEDVNGSCIETPYSPGSRVILYTAFSFGSLLAVFGNLLVMTSVLHFKQLHSPTNFLIASLACADFLVGVTVMLFSMVRTVESCWYFGAKFCTLHSCCDVAFCYSSVLHLCFICIDRYIVVTDPLVYATKFTVSVSGICISVSWILPLTYSGAVFYTGVNDDGLEELVSALNCVGGCQIIVSQGWVLIDFLLFFIPTLVMIILYSKIFLIAKQQAIKIETTSSKVESSSESYKIRVAKRERKAAKTLGVTVLAFVISWLPYTVDILIDAFMGFLTPAYIYEICCWSAYYNSAMNPLIYALFYPWFRKAIKLILSGDVLKASSSTISLFLE</sequence>
<protein>
    <recommendedName>
        <fullName>Trace amine-associated receptor 8</fullName>
        <shortName>TaR-8</shortName>
        <shortName>Trace amine receptor 8</shortName>
    </recommendedName>
    <alternativeName>
        <fullName>G-protein coupled receptor 102</fullName>
    </alternativeName>
    <alternativeName>
        <fullName>Trace amine receptor 5</fullName>
        <shortName>TaR-5</shortName>
    </alternativeName>
</protein>